<dbReference type="EMBL" id="AY653733">
    <property type="protein sequence ID" value="AAV50771.1"/>
    <property type="molecule type" value="Genomic_DNA"/>
</dbReference>
<dbReference type="KEGG" id="vg:9925138"/>
<dbReference type="OrthoDB" id="13112at10239"/>
<dbReference type="Proteomes" id="UP000001134">
    <property type="component" value="Genome"/>
</dbReference>
<dbReference type="InterPro" id="IPR055621">
    <property type="entry name" value="DUF7197"/>
</dbReference>
<dbReference type="Pfam" id="PF23827">
    <property type="entry name" value="DUF7197"/>
    <property type="match status" value="1"/>
</dbReference>
<sequence>MHNELNNHTITYSEDISNNISSKNNEKFTPKEIQILDKNKKFFSTDIKYVLTMLKIINGESDISIRVLDWFVANYSKKNNTYYNIKKNGKCDRFYVHNEYKNQLNGYSKQYFDPFCRKKKVAYKYTDKISKNVIQFESSIGQLNFFQWAIRNKIIRYVELHLKIIEEDMKETTKKNKEKKQNSQSQEISNSIEMEVSDDPDPNICLSSSINSICLSPVKKTSSASKSDSDKKNKRQQLSKSVYDHGIKKYDYPIQLDFD</sequence>
<evidence type="ECO:0000255" key="1"/>
<evidence type="ECO:0000256" key="2">
    <source>
        <dbReference type="SAM" id="MobiDB-lite"/>
    </source>
</evidence>
<name>YL507_MIMIV</name>
<keyword id="KW-0175">Coiled coil</keyword>
<keyword id="KW-1185">Reference proteome</keyword>
<proteinExistence type="predicted"/>
<accession>Q5UQ75</accession>
<organism>
    <name type="scientific">Acanthamoeba polyphaga mimivirus</name>
    <name type="common">APMV</name>
    <dbReference type="NCBI Taxonomy" id="212035"/>
    <lineage>
        <taxon>Viruses</taxon>
        <taxon>Varidnaviria</taxon>
        <taxon>Bamfordvirae</taxon>
        <taxon>Nucleocytoviricota</taxon>
        <taxon>Megaviricetes</taxon>
        <taxon>Imitervirales</taxon>
        <taxon>Mimiviridae</taxon>
        <taxon>Megamimivirinae</taxon>
        <taxon>Mimivirus</taxon>
        <taxon>Mimivirus bradfordmassiliense</taxon>
    </lineage>
</organism>
<feature type="chain" id="PRO_0000250630" description="Uncharacterized protein L507">
    <location>
        <begin position="1"/>
        <end position="259"/>
    </location>
</feature>
<feature type="region of interest" description="Disordered" evidence="2">
    <location>
        <begin position="172"/>
        <end position="197"/>
    </location>
</feature>
<feature type="region of interest" description="Disordered" evidence="2">
    <location>
        <begin position="217"/>
        <end position="240"/>
    </location>
</feature>
<feature type="coiled-coil region" evidence="1">
    <location>
        <begin position="158"/>
        <end position="187"/>
    </location>
</feature>
<feature type="compositionally biased region" description="Basic and acidic residues" evidence="2">
    <location>
        <begin position="172"/>
        <end position="181"/>
    </location>
</feature>
<feature type="compositionally biased region" description="Low complexity" evidence="2">
    <location>
        <begin position="182"/>
        <end position="193"/>
    </location>
</feature>
<feature type="compositionally biased region" description="Low complexity" evidence="2">
    <location>
        <begin position="217"/>
        <end position="226"/>
    </location>
</feature>
<gene>
    <name type="ordered locus">MIMI_L507</name>
</gene>
<protein>
    <recommendedName>
        <fullName>Uncharacterized protein L507</fullName>
    </recommendedName>
</protein>
<reference key="1">
    <citation type="journal article" date="2004" name="Science">
        <title>The 1.2-megabase genome sequence of Mimivirus.</title>
        <authorList>
            <person name="Raoult D."/>
            <person name="Audic S."/>
            <person name="Robert C."/>
            <person name="Abergel C."/>
            <person name="Renesto P."/>
            <person name="Ogata H."/>
            <person name="La Scola B."/>
            <person name="Susan M."/>
            <person name="Claverie J.-M."/>
        </authorList>
    </citation>
    <scope>NUCLEOTIDE SEQUENCE [LARGE SCALE GENOMIC DNA]</scope>
    <source>
        <strain>Rowbotham-Bradford</strain>
    </source>
</reference>
<organismHost>
    <name type="scientific">Acanthamoeba polyphaga</name>
    <name type="common">Amoeba</name>
    <dbReference type="NCBI Taxonomy" id="5757"/>
</organismHost>